<protein>
    <recommendedName>
        <fullName evidence="1">Ribonuclease HII</fullName>
        <shortName evidence="1">RNase HII</shortName>
        <ecNumber evidence="1">3.1.26.4</ecNumber>
    </recommendedName>
</protein>
<accession>Q7TXM7</accession>
<accession>A0A1R3Y2P4</accession>
<accession>X2BM53</accession>
<dbReference type="EC" id="3.1.26.4" evidence="1"/>
<dbReference type="EMBL" id="LT708304">
    <property type="protein sequence ID" value="SIU01547.1"/>
    <property type="molecule type" value="Genomic_DNA"/>
</dbReference>
<dbReference type="RefSeq" id="NP_856571.1">
    <property type="nucleotide sequence ID" value="NC_002945.3"/>
</dbReference>
<dbReference type="RefSeq" id="WP_010950796.1">
    <property type="nucleotide sequence ID" value="NC_002945.4"/>
</dbReference>
<dbReference type="SMR" id="Q7TXM7"/>
<dbReference type="KEGG" id="mbo:BQ2027_MB2926C"/>
<dbReference type="PATRIC" id="fig|233413.5.peg.3212"/>
<dbReference type="Proteomes" id="UP000001419">
    <property type="component" value="Chromosome"/>
</dbReference>
<dbReference type="GO" id="GO:0005737">
    <property type="term" value="C:cytoplasm"/>
    <property type="evidence" value="ECO:0007669"/>
    <property type="project" value="UniProtKB-SubCell"/>
</dbReference>
<dbReference type="GO" id="GO:0032299">
    <property type="term" value="C:ribonuclease H2 complex"/>
    <property type="evidence" value="ECO:0007669"/>
    <property type="project" value="TreeGrafter"/>
</dbReference>
<dbReference type="GO" id="GO:0030145">
    <property type="term" value="F:manganese ion binding"/>
    <property type="evidence" value="ECO:0007669"/>
    <property type="project" value="UniProtKB-UniRule"/>
</dbReference>
<dbReference type="GO" id="GO:0003723">
    <property type="term" value="F:RNA binding"/>
    <property type="evidence" value="ECO:0007669"/>
    <property type="project" value="InterPro"/>
</dbReference>
<dbReference type="GO" id="GO:0004523">
    <property type="term" value="F:RNA-DNA hybrid ribonuclease activity"/>
    <property type="evidence" value="ECO:0007669"/>
    <property type="project" value="UniProtKB-UniRule"/>
</dbReference>
<dbReference type="GO" id="GO:0043137">
    <property type="term" value="P:DNA replication, removal of RNA primer"/>
    <property type="evidence" value="ECO:0007669"/>
    <property type="project" value="TreeGrafter"/>
</dbReference>
<dbReference type="GO" id="GO:0006298">
    <property type="term" value="P:mismatch repair"/>
    <property type="evidence" value="ECO:0007669"/>
    <property type="project" value="TreeGrafter"/>
</dbReference>
<dbReference type="CDD" id="cd07182">
    <property type="entry name" value="RNase_HII_bacteria_HII_like"/>
    <property type="match status" value="1"/>
</dbReference>
<dbReference type="FunFam" id="3.30.420.10:FF:000113">
    <property type="entry name" value="Ribonuclease HII"/>
    <property type="match status" value="1"/>
</dbReference>
<dbReference type="Gene3D" id="3.30.420.10">
    <property type="entry name" value="Ribonuclease H-like superfamily/Ribonuclease H"/>
    <property type="match status" value="1"/>
</dbReference>
<dbReference type="HAMAP" id="MF_00052_B">
    <property type="entry name" value="RNase_HII_B"/>
    <property type="match status" value="1"/>
</dbReference>
<dbReference type="InterPro" id="IPR022898">
    <property type="entry name" value="RNase_HII"/>
</dbReference>
<dbReference type="InterPro" id="IPR001352">
    <property type="entry name" value="RNase_HII/HIII"/>
</dbReference>
<dbReference type="InterPro" id="IPR024567">
    <property type="entry name" value="RNase_HII/HIII_dom"/>
</dbReference>
<dbReference type="InterPro" id="IPR012337">
    <property type="entry name" value="RNaseH-like_sf"/>
</dbReference>
<dbReference type="InterPro" id="IPR036397">
    <property type="entry name" value="RNaseH_sf"/>
</dbReference>
<dbReference type="NCBIfam" id="NF000595">
    <property type="entry name" value="PRK00015.1-3"/>
    <property type="match status" value="1"/>
</dbReference>
<dbReference type="NCBIfam" id="NF000598">
    <property type="entry name" value="PRK00015.2-2"/>
    <property type="match status" value="1"/>
</dbReference>
<dbReference type="NCBIfam" id="NF000600">
    <property type="entry name" value="PRK00015.2-4"/>
    <property type="match status" value="1"/>
</dbReference>
<dbReference type="PANTHER" id="PTHR10954">
    <property type="entry name" value="RIBONUCLEASE H2 SUBUNIT A"/>
    <property type="match status" value="1"/>
</dbReference>
<dbReference type="PANTHER" id="PTHR10954:SF18">
    <property type="entry name" value="RIBONUCLEASE HII"/>
    <property type="match status" value="1"/>
</dbReference>
<dbReference type="Pfam" id="PF01351">
    <property type="entry name" value="RNase_HII"/>
    <property type="match status" value="1"/>
</dbReference>
<dbReference type="SUPFAM" id="SSF53098">
    <property type="entry name" value="Ribonuclease H-like"/>
    <property type="match status" value="1"/>
</dbReference>
<dbReference type="PROSITE" id="PS51975">
    <property type="entry name" value="RNASE_H_2"/>
    <property type="match status" value="1"/>
</dbReference>
<keyword id="KW-0963">Cytoplasm</keyword>
<keyword id="KW-0255">Endonuclease</keyword>
<keyword id="KW-0378">Hydrolase</keyword>
<keyword id="KW-0464">Manganese</keyword>
<keyword id="KW-0479">Metal-binding</keyword>
<keyword id="KW-0540">Nuclease</keyword>
<keyword id="KW-1185">Reference proteome</keyword>
<evidence type="ECO:0000255" key="1">
    <source>
        <dbReference type="HAMAP-Rule" id="MF_00052"/>
    </source>
</evidence>
<evidence type="ECO:0000255" key="2">
    <source>
        <dbReference type="PROSITE-ProRule" id="PRU01319"/>
    </source>
</evidence>
<evidence type="ECO:0000256" key="3">
    <source>
        <dbReference type="SAM" id="MobiDB-lite"/>
    </source>
</evidence>
<organism>
    <name type="scientific">Mycobacterium bovis (strain ATCC BAA-935 / AF2122/97)</name>
    <dbReference type="NCBI Taxonomy" id="233413"/>
    <lineage>
        <taxon>Bacteria</taxon>
        <taxon>Bacillati</taxon>
        <taxon>Actinomycetota</taxon>
        <taxon>Actinomycetes</taxon>
        <taxon>Mycobacteriales</taxon>
        <taxon>Mycobacteriaceae</taxon>
        <taxon>Mycobacterium</taxon>
        <taxon>Mycobacterium tuberculosis complex</taxon>
    </lineage>
</organism>
<proteinExistence type="inferred from homology"/>
<feature type="chain" id="PRO_0000111590" description="Ribonuclease HII">
    <location>
        <begin position="1"/>
        <end position="264"/>
    </location>
</feature>
<feature type="domain" description="RNase H type-2" evidence="2">
    <location>
        <begin position="33"/>
        <end position="224"/>
    </location>
</feature>
<feature type="region of interest" description="Disordered" evidence="3">
    <location>
        <begin position="222"/>
        <end position="264"/>
    </location>
</feature>
<feature type="binding site" evidence="1">
    <location>
        <position position="39"/>
    </location>
    <ligand>
        <name>a divalent metal cation</name>
        <dbReference type="ChEBI" id="CHEBI:60240"/>
    </ligand>
</feature>
<feature type="binding site" evidence="1">
    <location>
        <position position="40"/>
    </location>
    <ligand>
        <name>a divalent metal cation</name>
        <dbReference type="ChEBI" id="CHEBI:60240"/>
    </ligand>
</feature>
<feature type="binding site" evidence="1">
    <location>
        <position position="133"/>
    </location>
    <ligand>
        <name>a divalent metal cation</name>
        <dbReference type="ChEBI" id="CHEBI:60240"/>
    </ligand>
</feature>
<sequence length="264" mass="27627">MTKTWPPRTVIRKSGGLRGMRTLESALHRGGLGPVAGVDEVGRGACAGPLVVAACVLGPGRIASLAALDDSKKLSEQAREKLFPLICRYAVAYHVVFIPSAEVDRHGVHVANIEGMRRAVAGLAVRPGYVLSDGFRVPGLPMPSLPVIGGDAAAACIAAASVLAKVSRDRVMVALDADHPGYGFAEHKGYSTPAHSRALARLGPCPQHRYSFINVRRVASGSNTAEVADGQPDPRDGTAQTGEGRWSKSSHPATMRATGRAQGT</sequence>
<comment type="function">
    <text evidence="1">Endonuclease that specifically degrades the RNA of RNA-DNA hybrids.</text>
</comment>
<comment type="catalytic activity">
    <reaction evidence="1">
        <text>Endonucleolytic cleavage to 5'-phosphomonoester.</text>
        <dbReference type="EC" id="3.1.26.4"/>
    </reaction>
</comment>
<comment type="cofactor">
    <cofactor evidence="1">
        <name>Mn(2+)</name>
        <dbReference type="ChEBI" id="CHEBI:29035"/>
    </cofactor>
    <cofactor evidence="1">
        <name>Mg(2+)</name>
        <dbReference type="ChEBI" id="CHEBI:18420"/>
    </cofactor>
    <text evidence="1">Manganese or magnesium. Binds 1 divalent metal ion per monomer in the absence of substrate. May bind a second metal ion after substrate binding.</text>
</comment>
<comment type="subcellular location">
    <subcellularLocation>
        <location evidence="1">Cytoplasm</location>
    </subcellularLocation>
</comment>
<comment type="similarity">
    <text evidence="1">Belongs to the RNase HII family.</text>
</comment>
<gene>
    <name evidence="1" type="primary">rnhB</name>
    <name type="ordered locus">BQ2027_MB2926C</name>
</gene>
<name>RNH2_MYCBO</name>
<reference key="1">
    <citation type="journal article" date="2003" name="Proc. Natl. Acad. Sci. U.S.A.">
        <title>The complete genome sequence of Mycobacterium bovis.</title>
        <authorList>
            <person name="Garnier T."/>
            <person name="Eiglmeier K."/>
            <person name="Camus J.-C."/>
            <person name="Medina N."/>
            <person name="Mansoor H."/>
            <person name="Pryor M."/>
            <person name="Duthoy S."/>
            <person name="Grondin S."/>
            <person name="Lacroix C."/>
            <person name="Monsempe C."/>
            <person name="Simon S."/>
            <person name="Harris B."/>
            <person name="Atkin R."/>
            <person name="Doggett J."/>
            <person name="Mayes R."/>
            <person name="Keating L."/>
            <person name="Wheeler P.R."/>
            <person name="Parkhill J."/>
            <person name="Barrell B.G."/>
            <person name="Cole S.T."/>
            <person name="Gordon S.V."/>
            <person name="Hewinson R.G."/>
        </authorList>
    </citation>
    <scope>NUCLEOTIDE SEQUENCE [LARGE SCALE GENOMIC DNA]</scope>
    <source>
        <strain>ATCC BAA-935 / AF2122/97</strain>
    </source>
</reference>
<reference key="2">
    <citation type="journal article" date="2017" name="Genome Announc.">
        <title>Updated reference genome sequence and annotation of Mycobacterium bovis AF2122/97.</title>
        <authorList>
            <person name="Malone K.M."/>
            <person name="Farrell D."/>
            <person name="Stuber T.P."/>
            <person name="Schubert O.T."/>
            <person name="Aebersold R."/>
            <person name="Robbe-Austerman S."/>
            <person name="Gordon S.V."/>
        </authorList>
    </citation>
    <scope>NUCLEOTIDE SEQUENCE [LARGE SCALE GENOMIC DNA]</scope>
    <scope>GENOME REANNOTATION</scope>
    <source>
        <strain>ATCC BAA-935 / AF2122/97</strain>
    </source>
</reference>